<organism>
    <name type="scientific">Rattus norvegicus</name>
    <name type="common">Rat</name>
    <dbReference type="NCBI Taxonomy" id="10116"/>
    <lineage>
        <taxon>Eukaryota</taxon>
        <taxon>Metazoa</taxon>
        <taxon>Chordata</taxon>
        <taxon>Craniata</taxon>
        <taxon>Vertebrata</taxon>
        <taxon>Euteleostomi</taxon>
        <taxon>Mammalia</taxon>
        <taxon>Eutheria</taxon>
        <taxon>Euarchontoglires</taxon>
        <taxon>Glires</taxon>
        <taxon>Rodentia</taxon>
        <taxon>Myomorpha</taxon>
        <taxon>Muroidea</taxon>
        <taxon>Muridae</taxon>
        <taxon>Murinae</taxon>
        <taxon>Rattus</taxon>
    </lineage>
</organism>
<gene>
    <name type="primary">M6pr</name>
</gene>
<dbReference type="EMBL" id="BC079226">
    <property type="protein sequence ID" value="AAH79226.1"/>
    <property type="molecule type" value="mRNA"/>
</dbReference>
<dbReference type="RefSeq" id="NP_001007701.1">
    <property type="nucleotide sequence ID" value="NM_001007700.1"/>
</dbReference>
<dbReference type="RefSeq" id="XP_003752148.1">
    <property type="nucleotide sequence ID" value="XM_003752100.1"/>
</dbReference>
<dbReference type="RefSeq" id="XP_006257263.1">
    <property type="nucleotide sequence ID" value="XM_006257201.2"/>
</dbReference>
<dbReference type="RefSeq" id="XP_006257264.1">
    <property type="nucleotide sequence ID" value="XM_006257202.1"/>
</dbReference>
<dbReference type="RefSeq" id="XP_008761469.1">
    <property type="nucleotide sequence ID" value="XM_008763247.2"/>
</dbReference>
<dbReference type="SMR" id="Q6AY20"/>
<dbReference type="FunCoup" id="Q6AY20">
    <property type="interactions" value="3012"/>
</dbReference>
<dbReference type="STRING" id="10116.ENSRNOP00000020364"/>
<dbReference type="GlyCosmos" id="Q6AY20">
    <property type="glycosylation" value="5 sites, 9 glycans"/>
</dbReference>
<dbReference type="GlyGen" id="Q6AY20">
    <property type="glycosylation" value="5 sites, 9 N-linked glycans (1 site)"/>
</dbReference>
<dbReference type="iPTMnet" id="Q6AY20"/>
<dbReference type="PhosphoSitePlus" id="Q6AY20"/>
<dbReference type="SwissPalm" id="Q6AY20"/>
<dbReference type="jPOST" id="Q6AY20"/>
<dbReference type="PaxDb" id="10116-ENSRNOP00000020364"/>
<dbReference type="GeneID" id="312689"/>
<dbReference type="KEGG" id="rno:312689"/>
<dbReference type="UCSC" id="RGD:1359355">
    <property type="organism name" value="rat"/>
</dbReference>
<dbReference type="AGR" id="RGD:1359355"/>
<dbReference type="CTD" id="4074"/>
<dbReference type="RGD" id="1359355">
    <property type="gene designation" value="M6pr"/>
</dbReference>
<dbReference type="VEuPathDB" id="HostDB:ENSRNOG00000014992"/>
<dbReference type="eggNOG" id="ENOG502QTJ5">
    <property type="taxonomic scope" value="Eukaryota"/>
</dbReference>
<dbReference type="HOGENOM" id="CLU_058440_0_0_1"/>
<dbReference type="InParanoid" id="Q6AY20"/>
<dbReference type="OrthoDB" id="29460at2759"/>
<dbReference type="PhylomeDB" id="Q6AY20"/>
<dbReference type="TreeFam" id="TF328910"/>
<dbReference type="Reactome" id="R-RNO-432720">
    <property type="pathway name" value="Lysosome Vesicle Biogenesis"/>
</dbReference>
<dbReference type="Reactome" id="R-RNO-6811440">
    <property type="pathway name" value="Retrograde transport at the Trans-Golgi-Network"/>
</dbReference>
<dbReference type="Reactome" id="R-RNO-8856825">
    <property type="pathway name" value="Cargo recognition for clathrin-mediated endocytosis"/>
</dbReference>
<dbReference type="Reactome" id="R-RNO-8856828">
    <property type="pathway name" value="Clathrin-mediated endocytosis"/>
</dbReference>
<dbReference type="Reactome" id="R-RNO-9840310">
    <property type="pathway name" value="Glycosphingolipid catabolism"/>
</dbReference>
<dbReference type="PRO" id="PR:Q6AY20"/>
<dbReference type="Proteomes" id="UP000002494">
    <property type="component" value="Chromosome 4"/>
</dbReference>
<dbReference type="Bgee" id="ENSRNOG00000014992">
    <property type="expression patterns" value="Expressed in ovary and 19 other cell types or tissues"/>
</dbReference>
<dbReference type="GO" id="GO:0005768">
    <property type="term" value="C:endosome"/>
    <property type="evidence" value="ECO:0000266"/>
    <property type="project" value="RGD"/>
</dbReference>
<dbReference type="GO" id="GO:0005770">
    <property type="term" value="C:late endosome"/>
    <property type="evidence" value="ECO:0000266"/>
    <property type="project" value="RGD"/>
</dbReference>
<dbReference type="GO" id="GO:0005765">
    <property type="term" value="C:lysosomal membrane"/>
    <property type="evidence" value="ECO:0007669"/>
    <property type="project" value="UniProtKB-SubCell"/>
</dbReference>
<dbReference type="GO" id="GO:0048471">
    <property type="term" value="C:perinuclear region of cytoplasm"/>
    <property type="evidence" value="ECO:0000266"/>
    <property type="project" value="RGD"/>
</dbReference>
<dbReference type="GO" id="GO:0005802">
    <property type="term" value="C:trans-Golgi network"/>
    <property type="evidence" value="ECO:0000318"/>
    <property type="project" value="GO_Central"/>
</dbReference>
<dbReference type="GO" id="GO:0019904">
    <property type="term" value="F:protein domain specific binding"/>
    <property type="evidence" value="ECO:0007669"/>
    <property type="project" value="InterPro"/>
</dbReference>
<dbReference type="GO" id="GO:1905394">
    <property type="term" value="F:retromer complex binding"/>
    <property type="evidence" value="ECO:0000266"/>
    <property type="project" value="RGD"/>
</dbReference>
<dbReference type="GO" id="GO:0007041">
    <property type="term" value="P:lysosomal transport"/>
    <property type="evidence" value="ECO:0000250"/>
    <property type="project" value="UniProtKB"/>
</dbReference>
<dbReference type="GO" id="GO:0006622">
    <property type="term" value="P:protein targeting to lysosome"/>
    <property type="evidence" value="ECO:0000318"/>
    <property type="project" value="GO_Central"/>
</dbReference>
<dbReference type="GO" id="GO:0033299">
    <property type="term" value="P:secretion of lysosomal enzymes"/>
    <property type="evidence" value="ECO:0000266"/>
    <property type="project" value="RGD"/>
</dbReference>
<dbReference type="FunFam" id="2.70.130.10:FF:000008">
    <property type="entry name" value="Cation-dependent mannose-6-phosphate receptor"/>
    <property type="match status" value="1"/>
</dbReference>
<dbReference type="Gene3D" id="2.70.130.10">
    <property type="entry name" value="Mannose-6-phosphate receptor binding domain"/>
    <property type="match status" value="1"/>
</dbReference>
<dbReference type="InterPro" id="IPR028927">
    <property type="entry name" value="Man-6-P_rcpt"/>
</dbReference>
<dbReference type="InterPro" id="IPR000296">
    <property type="entry name" value="Man-6-P_rcpt_cation_dep"/>
</dbReference>
<dbReference type="InterPro" id="IPR009011">
    <property type="entry name" value="Man6P_isomerase_rcpt-bd_dom_sf"/>
</dbReference>
<dbReference type="InterPro" id="IPR044865">
    <property type="entry name" value="MRH_dom"/>
</dbReference>
<dbReference type="PANTHER" id="PTHR15071:SF29">
    <property type="entry name" value="CATION-DEPENDENT MANNOSE-6-PHOSPHATE RECEPTOR"/>
    <property type="match status" value="1"/>
</dbReference>
<dbReference type="PANTHER" id="PTHR15071">
    <property type="entry name" value="MANNOSE-6-PHOSPHATE RECEPTOR FAMILY MEMBER"/>
    <property type="match status" value="1"/>
</dbReference>
<dbReference type="Pfam" id="PF02157">
    <property type="entry name" value="Man-6-P_recep"/>
    <property type="match status" value="1"/>
</dbReference>
<dbReference type="PRINTS" id="PR00715">
    <property type="entry name" value="MAN6PRECEPTR"/>
</dbReference>
<dbReference type="SUPFAM" id="SSF50911">
    <property type="entry name" value="Mannose 6-phosphate receptor domain"/>
    <property type="match status" value="1"/>
</dbReference>
<dbReference type="PROSITE" id="PS51914">
    <property type="entry name" value="MRH"/>
    <property type="match status" value="1"/>
</dbReference>
<reference key="1">
    <citation type="journal article" date="2004" name="Genome Res.">
        <title>The status, quality, and expansion of the NIH full-length cDNA project: the Mammalian Gene Collection (MGC).</title>
        <authorList>
            <consortium name="The MGC Project Team"/>
        </authorList>
    </citation>
    <scope>NUCLEOTIDE SEQUENCE [LARGE SCALE MRNA]</scope>
    <source>
        <tissue>Testis</tissue>
    </source>
</reference>
<reference key="2">
    <citation type="journal article" date="2012" name="Nat. Commun.">
        <title>Quantitative maps of protein phosphorylation sites across 14 different rat organs and tissues.</title>
        <authorList>
            <person name="Lundby A."/>
            <person name="Secher A."/>
            <person name="Lage K."/>
            <person name="Nordsborg N.B."/>
            <person name="Dmytriyev A."/>
            <person name="Lundby C."/>
            <person name="Olsen J.V."/>
        </authorList>
    </citation>
    <scope>PHOSPHORYLATION [LARGE SCALE ANALYSIS] AT SER-268</scope>
    <scope>IDENTIFICATION BY MASS SPECTROMETRY [LARGE SCALE ANALYSIS]</scope>
</reference>
<keyword id="KW-1015">Disulfide bond</keyword>
<keyword id="KW-0325">Glycoprotein</keyword>
<keyword id="KW-0458">Lysosome</keyword>
<keyword id="KW-0472">Membrane</keyword>
<keyword id="KW-0597">Phosphoprotein</keyword>
<keyword id="KW-0675">Receptor</keyword>
<keyword id="KW-1185">Reference proteome</keyword>
<keyword id="KW-0732">Signal</keyword>
<keyword id="KW-0812">Transmembrane</keyword>
<keyword id="KW-1133">Transmembrane helix</keyword>
<keyword id="KW-0813">Transport</keyword>
<accession>Q6AY20</accession>
<sequence>MFPLSGCWRTELLLLLLLAVAVRESWQIEEKSCDLVGEKDKESKNEVALLERLRPLFNKSFESTVGQGSDTYSYIFRVCREAGNHSSGAGLVQINKSNEKETVVGRINETHIFNGSNWIMLIYKGGDEYDNHCGKEQRRAVVMISCNRHTLAGNFNPVSEERGKIQDCFYLFEMDSSLACSPEVSHLSVGSILLVIFASLVAVYIIGGFLYQRLVVGAKGMEQFPHLAFWQDLGNLVADGCDFVCRSKPRSVPAAYRGVGDDQLGEESEERDDHLLPM</sequence>
<evidence type="ECO:0000250" key="1"/>
<evidence type="ECO:0000255" key="2"/>
<evidence type="ECO:0000255" key="3">
    <source>
        <dbReference type="PROSITE-ProRule" id="PRU01262"/>
    </source>
</evidence>
<evidence type="ECO:0000256" key="4">
    <source>
        <dbReference type="SAM" id="MobiDB-lite"/>
    </source>
</evidence>
<evidence type="ECO:0007744" key="5">
    <source>
    </source>
</evidence>
<protein>
    <recommendedName>
        <fullName>Cation-dependent mannose-6-phosphate receptor</fullName>
        <shortName>CD Man-6-P receptor</shortName>
        <shortName>CD-MPR</shortName>
    </recommendedName>
</protein>
<comment type="function">
    <text evidence="1">Transport of phosphorylated lysosomal enzymes from the Golgi complex and the cell surface to lysosomes. Lysosomal enzymes bearing phosphomannosyl residues bind specifically to mannose-6-phosphate receptors in the Golgi apparatus and the resulting receptor-ligand complex is transported to an acidic prelyosomal compartment where the low pH mediates the dissociation of the complex (By similarity).</text>
</comment>
<comment type="subunit">
    <text evidence="1">Homodimer. Binds GGA1, GGA2 and GGA3 (By similarity).</text>
</comment>
<comment type="subcellular location">
    <subcellularLocation>
        <location evidence="1">Lysosome membrane</location>
        <topology evidence="1">Single-pass type I membrane protein</topology>
    </subcellularLocation>
</comment>
<comment type="domain">
    <text evidence="1">The extracellular domain is homologous to the repeating units (of approximately 147 AA) of the cation-independent mannose 6-phosphate receptor.</text>
</comment>
<comment type="miscellaneous">
    <text evidence="1">This receptor has optimal binding in the presence of divalent cations.</text>
</comment>
<proteinExistence type="evidence at protein level"/>
<feature type="signal peptide" evidence="1">
    <location>
        <begin position="1"/>
        <end position="21"/>
    </location>
</feature>
<feature type="chain" id="PRO_0000249712" description="Cation-dependent mannose-6-phosphate receptor">
    <location>
        <begin position="22"/>
        <end position="278"/>
    </location>
</feature>
<feature type="topological domain" description="Lumenal" evidence="2">
    <location>
        <begin position="22"/>
        <end position="188"/>
    </location>
</feature>
<feature type="transmembrane region" description="Helical" evidence="2">
    <location>
        <begin position="189"/>
        <end position="209"/>
    </location>
</feature>
<feature type="topological domain" description="Cytoplasmic" evidence="2">
    <location>
        <begin position="210"/>
        <end position="278"/>
    </location>
</feature>
<feature type="domain" description="MRH" evidence="3">
    <location>
        <begin position="31"/>
        <end position="182"/>
    </location>
</feature>
<feature type="region of interest" description="Disordered" evidence="4">
    <location>
        <begin position="256"/>
        <end position="278"/>
    </location>
</feature>
<feature type="modified residue" description="Phosphoserine" evidence="5">
    <location>
        <position position="268"/>
    </location>
</feature>
<feature type="glycosylation site" description="N-linked (GlcNAc...) asparagine" evidence="2">
    <location>
        <position position="58"/>
    </location>
</feature>
<feature type="glycosylation site" description="N-linked (GlcNAc...) asparagine" evidence="2">
    <location>
        <position position="84"/>
    </location>
</feature>
<feature type="glycosylation site" description="N-linked (GlcNAc...) asparagine" evidence="2">
    <location>
        <position position="95"/>
    </location>
</feature>
<feature type="glycosylation site" description="N-linked (GlcNAc...) asparagine" evidence="2">
    <location>
        <position position="108"/>
    </location>
</feature>
<feature type="glycosylation site" description="N-linked (GlcNAc...) asparagine" evidence="2">
    <location>
        <position position="114"/>
    </location>
</feature>
<feature type="disulfide bond" evidence="3">
    <location>
        <begin position="33"/>
        <end position="79"/>
    </location>
</feature>
<feature type="disulfide bond" evidence="3">
    <location>
        <begin position="133"/>
        <end position="168"/>
    </location>
</feature>
<feature type="disulfide bond" evidence="3">
    <location>
        <begin position="146"/>
        <end position="180"/>
    </location>
</feature>
<name>MPRD_RAT</name>